<accession>A1AHA1</accession>
<dbReference type="EC" id="6.1.1.14" evidence="1"/>
<dbReference type="EMBL" id="CP000468">
    <property type="protein sequence ID" value="ABJ03041.1"/>
    <property type="molecule type" value="Genomic_DNA"/>
</dbReference>
<dbReference type="RefSeq" id="WP_001168544.1">
    <property type="nucleotide sequence ID" value="NZ_CADILS010000015.1"/>
</dbReference>
<dbReference type="SMR" id="A1AHA1"/>
<dbReference type="GeneID" id="93778290"/>
<dbReference type="KEGG" id="ecv:APECO1_2890"/>
<dbReference type="HOGENOM" id="CLU_057066_1_0_6"/>
<dbReference type="Proteomes" id="UP000008216">
    <property type="component" value="Chromosome"/>
</dbReference>
<dbReference type="GO" id="GO:0005829">
    <property type="term" value="C:cytosol"/>
    <property type="evidence" value="ECO:0007669"/>
    <property type="project" value="TreeGrafter"/>
</dbReference>
<dbReference type="GO" id="GO:0005524">
    <property type="term" value="F:ATP binding"/>
    <property type="evidence" value="ECO:0007669"/>
    <property type="project" value="UniProtKB-UniRule"/>
</dbReference>
<dbReference type="GO" id="GO:0004820">
    <property type="term" value="F:glycine-tRNA ligase activity"/>
    <property type="evidence" value="ECO:0007669"/>
    <property type="project" value="UniProtKB-UniRule"/>
</dbReference>
<dbReference type="GO" id="GO:0006426">
    <property type="term" value="P:glycyl-tRNA aminoacylation"/>
    <property type="evidence" value="ECO:0007669"/>
    <property type="project" value="UniProtKB-UniRule"/>
</dbReference>
<dbReference type="CDD" id="cd00733">
    <property type="entry name" value="GlyRS_alpha_core"/>
    <property type="match status" value="1"/>
</dbReference>
<dbReference type="FunFam" id="1.20.58.180:FF:000001">
    <property type="entry name" value="Glycine--tRNA ligase alpha subunit"/>
    <property type="match status" value="1"/>
</dbReference>
<dbReference type="FunFam" id="3.30.930.10:FF:000006">
    <property type="entry name" value="Glycine--tRNA ligase alpha subunit"/>
    <property type="match status" value="1"/>
</dbReference>
<dbReference type="Gene3D" id="3.30.930.10">
    <property type="entry name" value="Bira Bifunctional Protein, Domain 2"/>
    <property type="match status" value="1"/>
</dbReference>
<dbReference type="Gene3D" id="1.20.58.180">
    <property type="entry name" value="Class II aaRS and biotin synthetases, domain 2"/>
    <property type="match status" value="1"/>
</dbReference>
<dbReference type="HAMAP" id="MF_00254">
    <property type="entry name" value="Gly_tRNA_synth_alpha"/>
    <property type="match status" value="1"/>
</dbReference>
<dbReference type="InterPro" id="IPR045864">
    <property type="entry name" value="aa-tRNA-synth_II/BPL/LPL"/>
</dbReference>
<dbReference type="InterPro" id="IPR006194">
    <property type="entry name" value="Gly-tRNA-synth_heterodimer"/>
</dbReference>
<dbReference type="InterPro" id="IPR002310">
    <property type="entry name" value="Gly-tRNA_ligase_asu"/>
</dbReference>
<dbReference type="NCBIfam" id="TIGR00388">
    <property type="entry name" value="glyQ"/>
    <property type="match status" value="1"/>
</dbReference>
<dbReference type="NCBIfam" id="NF006827">
    <property type="entry name" value="PRK09348.1"/>
    <property type="match status" value="1"/>
</dbReference>
<dbReference type="PANTHER" id="PTHR30075:SF2">
    <property type="entry name" value="GLYCINE--TRNA LIGASE, CHLOROPLASTIC_MITOCHONDRIAL 2"/>
    <property type="match status" value="1"/>
</dbReference>
<dbReference type="PANTHER" id="PTHR30075">
    <property type="entry name" value="GLYCYL-TRNA SYNTHETASE"/>
    <property type="match status" value="1"/>
</dbReference>
<dbReference type="Pfam" id="PF02091">
    <property type="entry name" value="tRNA-synt_2e"/>
    <property type="match status" value="1"/>
</dbReference>
<dbReference type="PRINTS" id="PR01044">
    <property type="entry name" value="TRNASYNTHGA"/>
</dbReference>
<dbReference type="SUPFAM" id="SSF55681">
    <property type="entry name" value="Class II aaRS and biotin synthetases"/>
    <property type="match status" value="1"/>
</dbReference>
<dbReference type="PROSITE" id="PS50861">
    <property type="entry name" value="AA_TRNA_LIGASE_II_GLYAB"/>
    <property type="match status" value="1"/>
</dbReference>
<name>SYGA_ECOK1</name>
<keyword id="KW-0030">Aminoacyl-tRNA synthetase</keyword>
<keyword id="KW-0067">ATP-binding</keyword>
<keyword id="KW-0963">Cytoplasm</keyword>
<keyword id="KW-0436">Ligase</keyword>
<keyword id="KW-0547">Nucleotide-binding</keyword>
<keyword id="KW-0648">Protein biosynthesis</keyword>
<keyword id="KW-1185">Reference proteome</keyword>
<feature type="chain" id="PRO_1000047418" description="Glycine--tRNA ligase alpha subunit">
    <location>
        <begin position="1"/>
        <end position="303"/>
    </location>
</feature>
<sequence>MQKFDTRTFQGLILTLQDYWARQGCTIVQPLDMEVGAGTSHPMTCLRALGPEPMAAAYVQPSRRPTDGRYGENPNRLQHYYQFQVVIKPSPDNIQELYLGSLKELGMDPTIHDIRFVEDNWENPTLGAWGLGWEVWLNGMEVTQFTYFQQVGGLECKPVTGEITYGLERLAMYIQGVDSVYDLVWSDGPLGKTTYGDVFHQNEVEQSTYNFEYADVDFLFTCFEQYEKEAQQLLALENPLPLPAYERILKAAHSFNLLDARKAISVTERQRYILRIRTLTKAVAEAYYASREALGFPMCNKDK</sequence>
<evidence type="ECO:0000255" key="1">
    <source>
        <dbReference type="HAMAP-Rule" id="MF_00254"/>
    </source>
</evidence>
<protein>
    <recommendedName>
        <fullName evidence="1">Glycine--tRNA ligase alpha subunit</fullName>
        <ecNumber evidence="1">6.1.1.14</ecNumber>
    </recommendedName>
    <alternativeName>
        <fullName evidence="1">Glycyl-tRNA synthetase alpha subunit</fullName>
        <shortName evidence="1">GlyRS</shortName>
    </alternativeName>
</protein>
<reference key="1">
    <citation type="journal article" date="2007" name="J. Bacteriol.">
        <title>The genome sequence of avian pathogenic Escherichia coli strain O1:K1:H7 shares strong similarities with human extraintestinal pathogenic E. coli genomes.</title>
        <authorList>
            <person name="Johnson T.J."/>
            <person name="Kariyawasam S."/>
            <person name="Wannemuehler Y."/>
            <person name="Mangiamele P."/>
            <person name="Johnson S.J."/>
            <person name="Doetkott C."/>
            <person name="Skyberg J.A."/>
            <person name="Lynne A.M."/>
            <person name="Johnson J.R."/>
            <person name="Nolan L.K."/>
        </authorList>
    </citation>
    <scope>NUCLEOTIDE SEQUENCE [LARGE SCALE GENOMIC DNA]</scope>
</reference>
<organism>
    <name type="scientific">Escherichia coli O1:K1 / APEC</name>
    <dbReference type="NCBI Taxonomy" id="405955"/>
    <lineage>
        <taxon>Bacteria</taxon>
        <taxon>Pseudomonadati</taxon>
        <taxon>Pseudomonadota</taxon>
        <taxon>Gammaproteobacteria</taxon>
        <taxon>Enterobacterales</taxon>
        <taxon>Enterobacteriaceae</taxon>
        <taxon>Escherichia</taxon>
    </lineage>
</organism>
<comment type="catalytic activity">
    <reaction evidence="1">
        <text>tRNA(Gly) + glycine + ATP = glycyl-tRNA(Gly) + AMP + diphosphate</text>
        <dbReference type="Rhea" id="RHEA:16013"/>
        <dbReference type="Rhea" id="RHEA-COMP:9664"/>
        <dbReference type="Rhea" id="RHEA-COMP:9683"/>
        <dbReference type="ChEBI" id="CHEBI:30616"/>
        <dbReference type="ChEBI" id="CHEBI:33019"/>
        <dbReference type="ChEBI" id="CHEBI:57305"/>
        <dbReference type="ChEBI" id="CHEBI:78442"/>
        <dbReference type="ChEBI" id="CHEBI:78522"/>
        <dbReference type="ChEBI" id="CHEBI:456215"/>
        <dbReference type="EC" id="6.1.1.14"/>
    </reaction>
</comment>
<comment type="subunit">
    <text evidence="1">Tetramer of two alpha and two beta subunits.</text>
</comment>
<comment type="subcellular location">
    <subcellularLocation>
        <location evidence="1">Cytoplasm</location>
    </subcellularLocation>
</comment>
<comment type="similarity">
    <text evidence="1">Belongs to the class-II aminoacyl-tRNA synthetase family.</text>
</comment>
<gene>
    <name evidence="1" type="primary">glyQ</name>
    <name type="ordered locus">Ecok1_35470</name>
    <name type="ORF">APECO1_2890</name>
</gene>
<proteinExistence type="inferred from homology"/>